<dbReference type="EMBL" id="CP001099">
    <property type="protein sequence ID" value="ACF10630.1"/>
    <property type="molecule type" value="Genomic_DNA"/>
</dbReference>
<dbReference type="RefSeq" id="WP_012501464.1">
    <property type="nucleotide sequence ID" value="NC_011027.1"/>
</dbReference>
<dbReference type="SMR" id="B3QR97"/>
<dbReference type="STRING" id="517417.Cpar_0203"/>
<dbReference type="KEGG" id="cpc:Cpar_0203"/>
<dbReference type="eggNOG" id="COG0522">
    <property type="taxonomic scope" value="Bacteria"/>
</dbReference>
<dbReference type="HOGENOM" id="CLU_092403_0_2_10"/>
<dbReference type="OrthoDB" id="9803672at2"/>
<dbReference type="Proteomes" id="UP000008811">
    <property type="component" value="Chromosome"/>
</dbReference>
<dbReference type="GO" id="GO:0015935">
    <property type="term" value="C:small ribosomal subunit"/>
    <property type="evidence" value="ECO:0007669"/>
    <property type="project" value="InterPro"/>
</dbReference>
<dbReference type="GO" id="GO:0019843">
    <property type="term" value="F:rRNA binding"/>
    <property type="evidence" value="ECO:0007669"/>
    <property type="project" value="UniProtKB-UniRule"/>
</dbReference>
<dbReference type="GO" id="GO:0003735">
    <property type="term" value="F:structural constituent of ribosome"/>
    <property type="evidence" value="ECO:0007669"/>
    <property type="project" value="InterPro"/>
</dbReference>
<dbReference type="GO" id="GO:0042274">
    <property type="term" value="P:ribosomal small subunit biogenesis"/>
    <property type="evidence" value="ECO:0007669"/>
    <property type="project" value="TreeGrafter"/>
</dbReference>
<dbReference type="GO" id="GO:0006412">
    <property type="term" value="P:translation"/>
    <property type="evidence" value="ECO:0007669"/>
    <property type="project" value="UniProtKB-UniRule"/>
</dbReference>
<dbReference type="CDD" id="cd00165">
    <property type="entry name" value="S4"/>
    <property type="match status" value="1"/>
</dbReference>
<dbReference type="FunFam" id="3.10.290.10:FF:000001">
    <property type="entry name" value="30S ribosomal protein S4"/>
    <property type="match status" value="1"/>
</dbReference>
<dbReference type="Gene3D" id="1.10.1050.10">
    <property type="entry name" value="Ribosomal Protein S4 Delta 41, Chain A, domain 1"/>
    <property type="match status" value="1"/>
</dbReference>
<dbReference type="Gene3D" id="3.10.290.10">
    <property type="entry name" value="RNA-binding S4 domain"/>
    <property type="match status" value="1"/>
</dbReference>
<dbReference type="HAMAP" id="MF_01306_B">
    <property type="entry name" value="Ribosomal_uS4_B"/>
    <property type="match status" value="1"/>
</dbReference>
<dbReference type="InterPro" id="IPR022801">
    <property type="entry name" value="Ribosomal_uS4"/>
</dbReference>
<dbReference type="InterPro" id="IPR005709">
    <property type="entry name" value="Ribosomal_uS4_bac-type"/>
</dbReference>
<dbReference type="InterPro" id="IPR001912">
    <property type="entry name" value="Ribosomal_uS4_N"/>
</dbReference>
<dbReference type="InterPro" id="IPR002942">
    <property type="entry name" value="S4_RNA-bd"/>
</dbReference>
<dbReference type="InterPro" id="IPR036986">
    <property type="entry name" value="S4_RNA-bd_sf"/>
</dbReference>
<dbReference type="NCBIfam" id="NF003717">
    <property type="entry name" value="PRK05327.1"/>
    <property type="match status" value="1"/>
</dbReference>
<dbReference type="NCBIfam" id="TIGR01017">
    <property type="entry name" value="rpsD_bact"/>
    <property type="match status" value="1"/>
</dbReference>
<dbReference type="PANTHER" id="PTHR11831">
    <property type="entry name" value="30S 40S RIBOSOMAL PROTEIN"/>
    <property type="match status" value="1"/>
</dbReference>
<dbReference type="PANTHER" id="PTHR11831:SF4">
    <property type="entry name" value="SMALL RIBOSOMAL SUBUNIT PROTEIN US4M"/>
    <property type="match status" value="1"/>
</dbReference>
<dbReference type="Pfam" id="PF00163">
    <property type="entry name" value="Ribosomal_S4"/>
    <property type="match status" value="1"/>
</dbReference>
<dbReference type="Pfam" id="PF01479">
    <property type="entry name" value="S4"/>
    <property type="match status" value="1"/>
</dbReference>
<dbReference type="SMART" id="SM01390">
    <property type="entry name" value="Ribosomal_S4"/>
    <property type="match status" value="1"/>
</dbReference>
<dbReference type="SMART" id="SM00363">
    <property type="entry name" value="S4"/>
    <property type="match status" value="1"/>
</dbReference>
<dbReference type="SUPFAM" id="SSF55174">
    <property type="entry name" value="Alpha-L RNA-binding motif"/>
    <property type="match status" value="1"/>
</dbReference>
<dbReference type="PROSITE" id="PS50889">
    <property type="entry name" value="S4"/>
    <property type="match status" value="1"/>
</dbReference>
<reference key="1">
    <citation type="submission" date="2008-06" db="EMBL/GenBank/DDBJ databases">
        <title>Complete sequence of Chlorobaculum parvum NCIB 8327.</title>
        <authorList>
            <consortium name="US DOE Joint Genome Institute"/>
            <person name="Lucas S."/>
            <person name="Copeland A."/>
            <person name="Lapidus A."/>
            <person name="Glavina del Rio T."/>
            <person name="Dalin E."/>
            <person name="Tice H."/>
            <person name="Bruce D."/>
            <person name="Goodwin L."/>
            <person name="Pitluck S."/>
            <person name="Schmutz J."/>
            <person name="Larimer F."/>
            <person name="Land M."/>
            <person name="Hauser L."/>
            <person name="Kyrpides N."/>
            <person name="Mikhailova N."/>
            <person name="Zhao F."/>
            <person name="Li T."/>
            <person name="Liu Z."/>
            <person name="Overmann J."/>
            <person name="Bryant D.A."/>
            <person name="Richardson P."/>
        </authorList>
    </citation>
    <scope>NUCLEOTIDE SEQUENCE [LARGE SCALE GENOMIC DNA]</scope>
    <source>
        <strain>DSM 263 / NCIMB 8327</strain>
    </source>
</reference>
<organism>
    <name type="scientific">Chlorobaculum parvum (strain DSM 263 / NCIMB 8327)</name>
    <name type="common">Chlorobium vibrioforme subsp. thiosulfatophilum</name>
    <dbReference type="NCBI Taxonomy" id="517417"/>
    <lineage>
        <taxon>Bacteria</taxon>
        <taxon>Pseudomonadati</taxon>
        <taxon>Chlorobiota</taxon>
        <taxon>Chlorobiia</taxon>
        <taxon>Chlorobiales</taxon>
        <taxon>Chlorobiaceae</taxon>
        <taxon>Chlorobaculum</taxon>
    </lineage>
</organism>
<accession>B3QR97</accession>
<name>RS4_CHLP8</name>
<sequence>MARFRGSITKVSRRLGIALSPKAEKYLERRPYAPGEHGQSRRGKVSEYALQLREKQKMKYLYGVLEKQFRIYYKKAVAQRGVTGDNLVKMLERRFDNVVYRCGFSPSRAGARQLVTHGHMLVNGKKVNIPSFLVSPGDQIEFRQKSRNLDAVADSLNKAAESRIPEWIQVDKANRKAVFLAIPEREAVQEPFNEQLVVELYSK</sequence>
<feature type="chain" id="PRO_1000140704" description="Small ribosomal subunit protein uS4">
    <location>
        <begin position="1"/>
        <end position="203"/>
    </location>
</feature>
<feature type="domain" description="S4 RNA-binding" evidence="1">
    <location>
        <begin position="93"/>
        <end position="154"/>
    </location>
</feature>
<protein>
    <recommendedName>
        <fullName evidence="1">Small ribosomal subunit protein uS4</fullName>
    </recommendedName>
    <alternativeName>
        <fullName evidence="2">30S ribosomal protein S4</fullName>
    </alternativeName>
</protein>
<gene>
    <name evidence="1" type="primary">rpsD</name>
    <name type="ordered locus">Cpar_0203</name>
</gene>
<comment type="function">
    <text evidence="1">One of the primary rRNA binding proteins, it binds directly to 16S rRNA where it nucleates assembly of the body of the 30S subunit.</text>
</comment>
<comment type="function">
    <text evidence="1">With S5 and S12 plays an important role in translational accuracy.</text>
</comment>
<comment type="subunit">
    <text evidence="1">Part of the 30S ribosomal subunit. Contacts protein S5. The interaction surface between S4 and S5 is involved in control of translational fidelity.</text>
</comment>
<comment type="similarity">
    <text evidence="1">Belongs to the universal ribosomal protein uS4 family.</text>
</comment>
<evidence type="ECO:0000255" key="1">
    <source>
        <dbReference type="HAMAP-Rule" id="MF_01306"/>
    </source>
</evidence>
<evidence type="ECO:0000305" key="2"/>
<proteinExistence type="inferred from homology"/>
<keyword id="KW-0687">Ribonucleoprotein</keyword>
<keyword id="KW-0689">Ribosomal protein</keyword>
<keyword id="KW-0694">RNA-binding</keyword>
<keyword id="KW-0699">rRNA-binding</keyword>